<evidence type="ECO:0000250" key="1">
    <source>
        <dbReference type="UniProtKB" id="P01308"/>
    </source>
</evidence>
<evidence type="ECO:0000269" key="2">
    <source>
    </source>
</evidence>
<evidence type="ECO:0000305" key="3"/>
<gene>
    <name type="primary">INS</name>
</gene>
<comment type="function">
    <text>Insulin decreases blood glucose concentration. It increases cell permeability to monosaccharides, amino acids and fatty acids. It accelerates glycolysis, the pentose phosphate cycle, and glycogen synthesis in liver.</text>
</comment>
<comment type="subunit">
    <text evidence="1">Heterodimer of a B chain and an A chain linked by two disulfide bonds.</text>
</comment>
<comment type="subcellular location">
    <subcellularLocation>
        <location>Secreted</location>
    </subcellularLocation>
</comment>
<comment type="similarity">
    <text evidence="3">Belongs to the insulin family.</text>
</comment>
<keyword id="KW-0119">Carbohydrate metabolism</keyword>
<keyword id="KW-0165">Cleavage on pair of basic residues</keyword>
<keyword id="KW-0903">Direct protein sequencing</keyword>
<keyword id="KW-1015">Disulfide bond</keyword>
<keyword id="KW-0313">Glucose metabolism</keyword>
<keyword id="KW-0372">Hormone</keyword>
<keyword id="KW-1185">Reference proteome</keyword>
<keyword id="KW-0964">Secreted</keyword>
<keyword id="KW-0732">Signal</keyword>
<organism>
    <name type="scientific">Canis lupus familiaris</name>
    <name type="common">Dog</name>
    <name type="synonym">Canis familiaris</name>
    <dbReference type="NCBI Taxonomy" id="9615"/>
    <lineage>
        <taxon>Eukaryota</taxon>
        <taxon>Metazoa</taxon>
        <taxon>Chordata</taxon>
        <taxon>Craniata</taxon>
        <taxon>Vertebrata</taxon>
        <taxon>Euteleostomi</taxon>
        <taxon>Mammalia</taxon>
        <taxon>Eutheria</taxon>
        <taxon>Laurasiatheria</taxon>
        <taxon>Carnivora</taxon>
        <taxon>Caniformia</taxon>
        <taxon>Canidae</taxon>
        <taxon>Canis</taxon>
    </lineage>
</organism>
<dbReference type="EMBL" id="V00179">
    <property type="protein sequence ID" value="CAA23475.1"/>
    <property type="molecule type" value="Genomic_DNA"/>
</dbReference>
<dbReference type="PIR" id="A92413">
    <property type="entry name" value="IPDG"/>
</dbReference>
<dbReference type="RefSeq" id="NP_001123565.1">
    <property type="nucleotide sequence ID" value="NM_001130093.2"/>
</dbReference>
<dbReference type="BMRB" id="P01321"/>
<dbReference type="SMR" id="P01321"/>
<dbReference type="FunCoup" id="P01321">
    <property type="interactions" value="335"/>
</dbReference>
<dbReference type="STRING" id="9615.ENSCAFP00000051648"/>
<dbReference type="PaxDb" id="9612-ENSCAFP00000040273"/>
<dbReference type="Ensembl" id="ENSCAFT00000016041.5">
    <property type="protein sequence ID" value="ENSCAFP00000014836.3"/>
    <property type="gene ID" value="ENSCAFG00000010092.6"/>
</dbReference>
<dbReference type="Ensembl" id="ENSCAFT00845019762.1">
    <property type="protein sequence ID" value="ENSCAFP00845015468.1"/>
    <property type="gene ID" value="ENSCAFG00845011141.1"/>
</dbReference>
<dbReference type="GeneID" id="483665"/>
<dbReference type="KEGG" id="cfa:483665"/>
<dbReference type="CTD" id="3630"/>
<dbReference type="VEuPathDB" id="HostDB:ENSCAFG00845011141"/>
<dbReference type="VGNC" id="VGNC:97204">
    <property type="gene designation" value="INS"/>
</dbReference>
<dbReference type="eggNOG" id="ENOG502T8I0">
    <property type="taxonomic scope" value="Eukaryota"/>
</dbReference>
<dbReference type="GeneTree" id="ENSGT00390000015440"/>
<dbReference type="HOGENOM" id="CLU_140421_1_0_1"/>
<dbReference type="InParanoid" id="P01321"/>
<dbReference type="OMA" id="LANQHLC"/>
<dbReference type="OrthoDB" id="10019596at2759"/>
<dbReference type="Reactome" id="R-CFA-264876">
    <property type="pathway name" value="Insulin processing"/>
</dbReference>
<dbReference type="Reactome" id="R-CFA-422085">
    <property type="pathway name" value="Synthesis, secretion, and deacylation of Ghrelin"/>
</dbReference>
<dbReference type="Reactome" id="R-CFA-6807878">
    <property type="pathway name" value="COPI-mediated anterograde transport"/>
</dbReference>
<dbReference type="Reactome" id="R-CFA-6811558">
    <property type="pathway name" value="PI5P, PP2A and IER3 Regulate PI3K/AKT Signaling"/>
</dbReference>
<dbReference type="Reactome" id="R-CFA-74713">
    <property type="pathway name" value="IRS activation"/>
</dbReference>
<dbReference type="Reactome" id="R-CFA-74749">
    <property type="pathway name" value="Signal attenuation"/>
</dbReference>
<dbReference type="Reactome" id="R-CFA-74751">
    <property type="pathway name" value="Insulin receptor signalling cascade"/>
</dbReference>
<dbReference type="Reactome" id="R-CFA-74752">
    <property type="pathway name" value="Signaling by Insulin receptor"/>
</dbReference>
<dbReference type="Reactome" id="R-CFA-77387">
    <property type="pathway name" value="Insulin receptor recycling"/>
</dbReference>
<dbReference type="Proteomes" id="UP000002254">
    <property type="component" value="Chromosome 18"/>
</dbReference>
<dbReference type="Proteomes" id="UP000694429">
    <property type="component" value="Unplaced"/>
</dbReference>
<dbReference type="Proteomes" id="UP000694542">
    <property type="component" value="Unplaced"/>
</dbReference>
<dbReference type="Proteomes" id="UP000805418">
    <property type="component" value="Chromosome 18"/>
</dbReference>
<dbReference type="Bgee" id="ENSCAFG00000010092">
    <property type="expression patterns" value="Expressed in pancreas and 7 other cell types or tissues"/>
</dbReference>
<dbReference type="GO" id="GO:0005615">
    <property type="term" value="C:extracellular space"/>
    <property type="evidence" value="ECO:0000318"/>
    <property type="project" value="GO_Central"/>
</dbReference>
<dbReference type="GO" id="GO:0005179">
    <property type="term" value="F:hormone activity"/>
    <property type="evidence" value="ECO:0007669"/>
    <property type="project" value="UniProtKB-KW"/>
</dbReference>
<dbReference type="GO" id="GO:0042802">
    <property type="term" value="F:identical protein binding"/>
    <property type="evidence" value="ECO:0007669"/>
    <property type="project" value="Ensembl"/>
</dbReference>
<dbReference type="GO" id="GO:0005158">
    <property type="term" value="F:insulin receptor binding"/>
    <property type="evidence" value="ECO:0007669"/>
    <property type="project" value="Ensembl"/>
</dbReference>
<dbReference type="GO" id="GO:0005159">
    <property type="term" value="F:insulin-like growth factor receptor binding"/>
    <property type="evidence" value="ECO:0007669"/>
    <property type="project" value="Ensembl"/>
</dbReference>
<dbReference type="GO" id="GO:0002020">
    <property type="term" value="F:protease binding"/>
    <property type="evidence" value="ECO:0007669"/>
    <property type="project" value="Ensembl"/>
</dbReference>
<dbReference type="GO" id="GO:0006953">
    <property type="term" value="P:acute-phase response"/>
    <property type="evidence" value="ECO:0007669"/>
    <property type="project" value="Ensembl"/>
</dbReference>
<dbReference type="GO" id="GO:0046631">
    <property type="term" value="P:alpha-beta T cell activation"/>
    <property type="evidence" value="ECO:0007669"/>
    <property type="project" value="Ensembl"/>
</dbReference>
<dbReference type="GO" id="GO:0055089">
    <property type="term" value="P:fatty acid homeostasis"/>
    <property type="evidence" value="ECO:0007669"/>
    <property type="project" value="Ensembl"/>
</dbReference>
<dbReference type="GO" id="GO:0007186">
    <property type="term" value="P:G protein-coupled receptor signaling pathway"/>
    <property type="evidence" value="ECO:0007669"/>
    <property type="project" value="Ensembl"/>
</dbReference>
<dbReference type="GO" id="GO:0042593">
    <property type="term" value="P:glucose homeostasis"/>
    <property type="evidence" value="ECO:0000318"/>
    <property type="project" value="GO_Central"/>
</dbReference>
<dbReference type="GO" id="GO:0006006">
    <property type="term" value="P:glucose metabolic process"/>
    <property type="evidence" value="ECO:0007669"/>
    <property type="project" value="UniProtKB-KW"/>
</dbReference>
<dbReference type="GO" id="GO:0008286">
    <property type="term" value="P:insulin receptor signaling pathway"/>
    <property type="evidence" value="ECO:0007669"/>
    <property type="project" value="Ensembl"/>
</dbReference>
<dbReference type="GO" id="GO:0002674">
    <property type="term" value="P:negative regulation of acute inflammatory response"/>
    <property type="evidence" value="ECO:0007669"/>
    <property type="project" value="Ensembl"/>
</dbReference>
<dbReference type="GO" id="GO:0045922">
    <property type="term" value="P:negative regulation of fatty acid metabolic process"/>
    <property type="evidence" value="ECO:0007669"/>
    <property type="project" value="Ensembl"/>
</dbReference>
<dbReference type="GO" id="GO:2000252">
    <property type="term" value="P:negative regulation of feeding behavior"/>
    <property type="evidence" value="ECO:0007669"/>
    <property type="project" value="Ensembl"/>
</dbReference>
<dbReference type="GO" id="GO:0010629">
    <property type="term" value="P:negative regulation of gene expression"/>
    <property type="evidence" value="ECO:0007669"/>
    <property type="project" value="Ensembl"/>
</dbReference>
<dbReference type="GO" id="GO:0045818">
    <property type="term" value="P:negative regulation of glycogen catabolic process"/>
    <property type="evidence" value="ECO:0007669"/>
    <property type="project" value="Ensembl"/>
</dbReference>
<dbReference type="GO" id="GO:0050995">
    <property type="term" value="P:negative regulation of lipid catabolic process"/>
    <property type="evidence" value="ECO:0007669"/>
    <property type="project" value="Ensembl"/>
</dbReference>
<dbReference type="GO" id="GO:0042177">
    <property type="term" value="P:negative regulation of protein catabolic process"/>
    <property type="evidence" value="ECO:0007669"/>
    <property type="project" value="Ensembl"/>
</dbReference>
<dbReference type="GO" id="GO:0050709">
    <property type="term" value="P:negative regulation of protein secretion"/>
    <property type="evidence" value="ECO:0007669"/>
    <property type="project" value="Ensembl"/>
</dbReference>
<dbReference type="GO" id="GO:1903427">
    <property type="term" value="P:negative regulation of reactive oxygen species biosynthetic process"/>
    <property type="evidence" value="ECO:0007669"/>
    <property type="project" value="Ensembl"/>
</dbReference>
<dbReference type="GO" id="GO:0060266">
    <property type="term" value="P:negative regulation of respiratory burst involved in inflammatory response"/>
    <property type="evidence" value="ECO:0007669"/>
    <property type="project" value="Ensembl"/>
</dbReference>
<dbReference type="GO" id="GO:1990535">
    <property type="term" value="P:neuron projection maintenance"/>
    <property type="evidence" value="ECO:0007669"/>
    <property type="project" value="Ensembl"/>
</dbReference>
<dbReference type="GO" id="GO:0038060">
    <property type="term" value="P:nitric oxide-cGMP-mediated signaling"/>
    <property type="evidence" value="ECO:0007669"/>
    <property type="project" value="Ensembl"/>
</dbReference>
<dbReference type="GO" id="GO:0043123">
    <property type="term" value="P:positive regulation of canonical NF-kappaB signal transduction"/>
    <property type="evidence" value="ECO:0007669"/>
    <property type="project" value="Ensembl"/>
</dbReference>
<dbReference type="GO" id="GO:0008284">
    <property type="term" value="P:positive regulation of cell population proliferation"/>
    <property type="evidence" value="ECO:0007669"/>
    <property type="project" value="Ensembl"/>
</dbReference>
<dbReference type="GO" id="GO:0001819">
    <property type="term" value="P:positive regulation of cytokine production"/>
    <property type="evidence" value="ECO:0007669"/>
    <property type="project" value="Ensembl"/>
</dbReference>
<dbReference type="GO" id="GO:0046326">
    <property type="term" value="P:positive regulation of D-glucose import"/>
    <property type="evidence" value="ECO:0007669"/>
    <property type="project" value="Ensembl"/>
</dbReference>
<dbReference type="GO" id="GO:1902952">
    <property type="term" value="P:positive regulation of dendritic spine maintenance"/>
    <property type="evidence" value="ECO:0007669"/>
    <property type="project" value="Ensembl"/>
</dbReference>
<dbReference type="GO" id="GO:0045725">
    <property type="term" value="P:positive regulation of glycogen biosynthetic process"/>
    <property type="evidence" value="ECO:0007669"/>
    <property type="project" value="Ensembl"/>
</dbReference>
<dbReference type="GO" id="GO:0045821">
    <property type="term" value="P:positive regulation of glycolytic process"/>
    <property type="evidence" value="ECO:0007669"/>
    <property type="project" value="Ensembl"/>
</dbReference>
<dbReference type="GO" id="GO:0046628">
    <property type="term" value="P:positive regulation of insulin receptor signaling pathway"/>
    <property type="evidence" value="ECO:0007669"/>
    <property type="project" value="Ensembl"/>
</dbReference>
<dbReference type="GO" id="GO:0043410">
    <property type="term" value="P:positive regulation of MAPK cascade"/>
    <property type="evidence" value="ECO:0007669"/>
    <property type="project" value="Ensembl"/>
</dbReference>
<dbReference type="GO" id="GO:0045840">
    <property type="term" value="P:positive regulation of mitotic nuclear division"/>
    <property type="evidence" value="ECO:0007669"/>
    <property type="project" value="Ensembl"/>
</dbReference>
<dbReference type="GO" id="GO:0010750">
    <property type="term" value="P:positive regulation of nitric oxide mediated signal transduction"/>
    <property type="evidence" value="ECO:0007669"/>
    <property type="project" value="Ensembl"/>
</dbReference>
<dbReference type="GO" id="GO:0051897">
    <property type="term" value="P:positive regulation of phosphatidylinositol 3-kinase/protein kinase B signal transduction"/>
    <property type="evidence" value="ECO:0007669"/>
    <property type="project" value="Ensembl"/>
</dbReference>
<dbReference type="GO" id="GO:1900182">
    <property type="term" value="P:positive regulation of protein localization to nucleus"/>
    <property type="evidence" value="ECO:0007669"/>
    <property type="project" value="Ensembl"/>
</dbReference>
<dbReference type="GO" id="GO:0050714">
    <property type="term" value="P:positive regulation of protein secretion"/>
    <property type="evidence" value="ECO:0000318"/>
    <property type="project" value="GO_Central"/>
</dbReference>
<dbReference type="GO" id="GO:0060267">
    <property type="term" value="P:positive regulation of respiratory burst"/>
    <property type="evidence" value="ECO:0007669"/>
    <property type="project" value="Ensembl"/>
</dbReference>
<dbReference type="GO" id="GO:1903076">
    <property type="term" value="P:regulation of protein localization to plasma membrane"/>
    <property type="evidence" value="ECO:0007669"/>
    <property type="project" value="Ensembl"/>
</dbReference>
<dbReference type="GO" id="GO:0042311">
    <property type="term" value="P:vasodilation"/>
    <property type="evidence" value="ECO:0007669"/>
    <property type="project" value="Ensembl"/>
</dbReference>
<dbReference type="GO" id="GO:0042060">
    <property type="term" value="P:wound healing"/>
    <property type="evidence" value="ECO:0007669"/>
    <property type="project" value="Ensembl"/>
</dbReference>
<dbReference type="CDD" id="cd04367">
    <property type="entry name" value="IlGF_insulin_like"/>
    <property type="match status" value="1"/>
</dbReference>
<dbReference type="FunFam" id="1.10.100.10:FF:000003">
    <property type="entry name" value="Insulin"/>
    <property type="match status" value="1"/>
</dbReference>
<dbReference type="Gene3D" id="1.10.100.10">
    <property type="entry name" value="Insulin-like"/>
    <property type="match status" value="1"/>
</dbReference>
<dbReference type="InterPro" id="IPR004825">
    <property type="entry name" value="Insulin"/>
</dbReference>
<dbReference type="InterPro" id="IPR016179">
    <property type="entry name" value="Insulin-like"/>
</dbReference>
<dbReference type="InterPro" id="IPR036438">
    <property type="entry name" value="Insulin-like_sf"/>
</dbReference>
<dbReference type="InterPro" id="IPR022353">
    <property type="entry name" value="Insulin_CS"/>
</dbReference>
<dbReference type="InterPro" id="IPR022352">
    <property type="entry name" value="Insulin_family"/>
</dbReference>
<dbReference type="PANTHER" id="PTHR11454:SF9">
    <property type="entry name" value="INSULIN"/>
    <property type="match status" value="1"/>
</dbReference>
<dbReference type="PANTHER" id="PTHR11454">
    <property type="entry name" value="INSULIN/INSULIN GROWTH FACTOR"/>
    <property type="match status" value="1"/>
</dbReference>
<dbReference type="Pfam" id="PF00049">
    <property type="entry name" value="Insulin"/>
    <property type="match status" value="1"/>
</dbReference>
<dbReference type="PRINTS" id="PR00277">
    <property type="entry name" value="INSULIN"/>
</dbReference>
<dbReference type="PRINTS" id="PR00276">
    <property type="entry name" value="INSULINFAMLY"/>
</dbReference>
<dbReference type="SMART" id="SM00078">
    <property type="entry name" value="IlGF"/>
    <property type="match status" value="1"/>
</dbReference>
<dbReference type="SUPFAM" id="SSF56994">
    <property type="entry name" value="Insulin-like"/>
    <property type="match status" value="1"/>
</dbReference>
<dbReference type="PROSITE" id="PS00262">
    <property type="entry name" value="INSULIN"/>
    <property type="match status" value="1"/>
</dbReference>
<sequence>MALWMRLLPLLALLALWAPAPTRAFVNQHLCGSHLVEALYLVCGERGFFYTPKARREVEDLQVRDVELAGAPGEGGLQPLALEGALQKRGIVEQCCTSICSLYQLENYCN</sequence>
<accession>P01321</accession>
<feature type="signal peptide" evidence="2">
    <location>
        <begin position="1"/>
        <end position="24"/>
    </location>
</feature>
<feature type="peptide" id="PRO_0000015777" description="Insulin B chain">
    <location>
        <begin position="25"/>
        <end position="54"/>
    </location>
</feature>
<feature type="propeptide" id="PRO_0000015778" description="C peptide">
    <location>
        <begin position="57"/>
        <end position="87"/>
    </location>
</feature>
<feature type="peptide" id="PRO_0000015779" description="Insulin A chain">
    <location>
        <begin position="90"/>
        <end position="110"/>
    </location>
</feature>
<feature type="disulfide bond" description="Interchain (between B and A chains)" evidence="1">
    <location>
        <begin position="31"/>
        <end position="96"/>
    </location>
</feature>
<feature type="disulfide bond" description="Interchain (between B and A chains)" evidence="1">
    <location>
        <begin position="43"/>
        <end position="109"/>
    </location>
</feature>
<feature type="disulfide bond" evidence="1">
    <location>
        <begin position="95"/>
        <end position="100"/>
    </location>
</feature>
<protein>
    <recommendedName>
        <fullName>Insulin</fullName>
    </recommendedName>
    <component>
        <recommendedName>
            <fullName>Insulin B chain</fullName>
        </recommendedName>
    </component>
    <component>
        <recommendedName>
            <fullName>Insulin A chain</fullName>
        </recommendedName>
    </component>
</protein>
<reference key="1">
    <citation type="journal article" date="1983" name="J. Biol. Chem.">
        <title>Cloning and nucleotide sequence analysis of the dog insulin gene. Coded amino acid sequence of canine preproinsulin predicts an additional C-peptide fragment.</title>
        <authorList>
            <person name="Kwok S.C.M."/>
            <person name="Chan S.J."/>
            <person name="Steiner D.F."/>
        </authorList>
    </citation>
    <scope>NUCLEOTIDE SEQUENCE [GENOMIC DNA]</scope>
</reference>
<reference key="2">
    <citation type="journal article" date="1966" name="Am. J. Med.">
        <title>Species variation in the amino acid sequence of insulin.</title>
        <authorList>
            <person name="Smith L.F."/>
        </authorList>
    </citation>
    <scope>PROTEIN SEQUENCE OF 25-54 AND 90-110</scope>
</reference>
<proteinExistence type="evidence at protein level"/>
<name>INS_CANLF</name>